<keyword id="KW-0997">Cell inner membrane</keyword>
<keyword id="KW-1003">Cell membrane</keyword>
<keyword id="KW-0472">Membrane</keyword>
<keyword id="KW-1185">Reference proteome</keyword>
<keyword id="KW-0812">Transmembrane</keyword>
<keyword id="KW-1133">Transmembrane helix</keyword>
<name>YBJM_ECOLI</name>
<organism>
    <name type="scientific">Escherichia coli (strain K12)</name>
    <dbReference type="NCBI Taxonomy" id="83333"/>
    <lineage>
        <taxon>Bacteria</taxon>
        <taxon>Pseudomonadati</taxon>
        <taxon>Pseudomonadota</taxon>
        <taxon>Gammaproteobacteria</taxon>
        <taxon>Enterobacterales</taxon>
        <taxon>Enterobacteriaceae</taxon>
        <taxon>Escherichia</taxon>
    </lineage>
</organism>
<dbReference type="EMBL" id="U00096">
    <property type="protein sequence ID" value="AAC73935.1"/>
    <property type="molecule type" value="Genomic_DNA"/>
</dbReference>
<dbReference type="EMBL" id="AP009048">
    <property type="protein sequence ID" value="BAE76367.1"/>
    <property type="molecule type" value="Genomic_DNA"/>
</dbReference>
<dbReference type="PIR" id="H64822">
    <property type="entry name" value="H64822"/>
</dbReference>
<dbReference type="RefSeq" id="NP_415369.1">
    <property type="nucleotide sequence ID" value="NC_000913.3"/>
</dbReference>
<dbReference type="RefSeq" id="WP_000681108.1">
    <property type="nucleotide sequence ID" value="NZ_STEB01000019.1"/>
</dbReference>
<dbReference type="BioGRID" id="4260802">
    <property type="interactions" value="12"/>
</dbReference>
<dbReference type="BioGRID" id="849851">
    <property type="interactions" value="4"/>
</dbReference>
<dbReference type="FunCoup" id="P64439">
    <property type="interactions" value="45"/>
</dbReference>
<dbReference type="IntAct" id="P64439">
    <property type="interactions" value="4"/>
</dbReference>
<dbReference type="STRING" id="511145.b0848"/>
<dbReference type="PaxDb" id="511145-b0848"/>
<dbReference type="EnsemblBacteria" id="AAC73935">
    <property type="protein sequence ID" value="AAC73935"/>
    <property type="gene ID" value="b0848"/>
</dbReference>
<dbReference type="GeneID" id="945477"/>
<dbReference type="KEGG" id="ecj:JW0832"/>
<dbReference type="KEGG" id="eco:b0848"/>
<dbReference type="KEGG" id="ecoc:C3026_05295"/>
<dbReference type="PATRIC" id="fig|1411691.4.peg.1430"/>
<dbReference type="EchoBASE" id="EB3446"/>
<dbReference type="eggNOG" id="ENOG5031BJ4">
    <property type="taxonomic scope" value="Bacteria"/>
</dbReference>
<dbReference type="HOGENOM" id="CLU_140365_0_0_6"/>
<dbReference type="InParanoid" id="P64439"/>
<dbReference type="OMA" id="WQELAYV"/>
<dbReference type="PhylomeDB" id="P64439"/>
<dbReference type="BioCyc" id="EcoCyc:G6446-MONOMER"/>
<dbReference type="PRO" id="PR:P64439"/>
<dbReference type="Proteomes" id="UP000000625">
    <property type="component" value="Chromosome"/>
</dbReference>
<dbReference type="GO" id="GO:0005886">
    <property type="term" value="C:plasma membrane"/>
    <property type="evidence" value="ECO:0000314"/>
    <property type="project" value="EcoCyc"/>
</dbReference>
<dbReference type="InterPro" id="IPR020368">
    <property type="entry name" value="Uncharacterised_YbjM"/>
</dbReference>
<dbReference type="Pfam" id="PF11045">
    <property type="entry name" value="YbjM"/>
    <property type="match status" value="1"/>
</dbReference>
<protein>
    <recommendedName>
        <fullName>Inner membrane protein YbjM</fullName>
    </recommendedName>
</protein>
<proteinExistence type="evidence at protein level"/>
<reference key="1">
    <citation type="journal article" date="1997" name="Science">
        <title>The complete genome sequence of Escherichia coli K-12.</title>
        <authorList>
            <person name="Blattner F.R."/>
            <person name="Plunkett G. III"/>
            <person name="Bloch C.A."/>
            <person name="Perna N.T."/>
            <person name="Burland V."/>
            <person name="Riley M."/>
            <person name="Collado-Vides J."/>
            <person name="Glasner J.D."/>
            <person name="Rode C.K."/>
            <person name="Mayhew G.F."/>
            <person name="Gregor J."/>
            <person name="Davis N.W."/>
            <person name="Kirkpatrick H.A."/>
            <person name="Goeden M.A."/>
            <person name="Rose D.J."/>
            <person name="Mau B."/>
            <person name="Shao Y."/>
        </authorList>
    </citation>
    <scope>NUCLEOTIDE SEQUENCE [LARGE SCALE GENOMIC DNA]</scope>
    <source>
        <strain>K12 / MG1655 / ATCC 47076</strain>
    </source>
</reference>
<reference key="2">
    <citation type="journal article" date="2006" name="Mol. Syst. Biol.">
        <title>Highly accurate genome sequences of Escherichia coli K-12 strains MG1655 and W3110.</title>
        <authorList>
            <person name="Hayashi K."/>
            <person name="Morooka N."/>
            <person name="Yamamoto Y."/>
            <person name="Fujita K."/>
            <person name="Isono K."/>
            <person name="Choi S."/>
            <person name="Ohtsubo E."/>
            <person name="Baba T."/>
            <person name="Wanner B.L."/>
            <person name="Mori H."/>
            <person name="Horiuchi T."/>
        </authorList>
    </citation>
    <scope>NUCLEOTIDE SEQUENCE [LARGE SCALE GENOMIC DNA]</scope>
    <source>
        <strain>K12 / W3110 / ATCC 27325 / DSM 5911</strain>
    </source>
</reference>
<reference key="3">
    <citation type="journal article" date="2005" name="Science">
        <title>Global topology analysis of the Escherichia coli inner membrane proteome.</title>
        <authorList>
            <person name="Daley D.O."/>
            <person name="Rapp M."/>
            <person name="Granseth E."/>
            <person name="Melen K."/>
            <person name="Drew D."/>
            <person name="von Heijne G."/>
        </authorList>
    </citation>
    <scope>TOPOLOGY [LARGE SCALE ANALYSIS]</scope>
    <source>
        <strain>K12 / MG1655 / ATCC 47076</strain>
    </source>
</reference>
<feature type="chain" id="PRO_0000168740" description="Inner membrane protein YbjM">
    <location>
        <begin position="1"/>
        <end position="125"/>
    </location>
</feature>
<feature type="topological domain" description="Cytoplasmic" evidence="1">
    <location>
        <begin position="1"/>
        <end position="6"/>
    </location>
</feature>
<feature type="transmembrane region" description="Helical" evidence="1">
    <location>
        <begin position="7"/>
        <end position="27"/>
    </location>
</feature>
<feature type="topological domain" description="Periplasmic" evidence="1">
    <location>
        <begin position="28"/>
        <end position="34"/>
    </location>
</feature>
<feature type="transmembrane region" description="Helical" evidence="1">
    <location>
        <begin position="35"/>
        <end position="55"/>
    </location>
</feature>
<feature type="topological domain" description="Cytoplasmic" evidence="1">
    <location>
        <begin position="56"/>
        <end position="64"/>
    </location>
</feature>
<feature type="transmembrane region" description="Helical" evidence="1">
    <location>
        <begin position="65"/>
        <end position="85"/>
    </location>
</feature>
<feature type="topological domain" description="Periplasmic" evidence="1">
    <location>
        <begin position="86"/>
        <end position="92"/>
    </location>
</feature>
<feature type="transmembrane region" description="Helical" evidence="1">
    <location>
        <begin position="93"/>
        <end position="113"/>
    </location>
</feature>
<feature type="topological domain" description="Cytoplasmic" evidence="1">
    <location>
        <begin position="114"/>
        <end position="125"/>
    </location>
</feature>
<evidence type="ECO:0000255" key="1"/>
<sequence length="125" mass="14203">MKHKQRWAGAICCFVLFIVVCLFLATHMKGAFRAAGHPEIGLLFFILPGAVASFFSQRREVLKPLFGAMLAAPCSMLIMRLFFSPTRSFWQELAWLLSAVFWCALGALCFLFISSLFKPQHRKNQ</sequence>
<accession>P64439</accession>
<accession>P75813</accession>
<accession>Q2MBI9</accession>
<comment type="subcellular location">
    <subcellularLocation>
        <location>Cell inner membrane</location>
        <topology>Multi-pass membrane protein</topology>
    </subcellularLocation>
</comment>
<gene>
    <name type="primary">ybjM</name>
    <name type="ordered locus">b0848</name>
    <name type="ordered locus">JW0832</name>
</gene>